<keyword id="KW-1185">Reference proteome</keyword>
<feature type="chain" id="PRO_0000226246" description="Checkpoint protein HUS1B">
    <location>
        <begin position="1"/>
        <end position="276"/>
    </location>
</feature>
<organism>
    <name type="scientific">Mus musculus</name>
    <name type="common">Mouse</name>
    <dbReference type="NCBI Taxonomy" id="10090"/>
    <lineage>
        <taxon>Eukaryota</taxon>
        <taxon>Metazoa</taxon>
        <taxon>Chordata</taxon>
        <taxon>Craniata</taxon>
        <taxon>Vertebrata</taxon>
        <taxon>Euteleostomi</taxon>
        <taxon>Mammalia</taxon>
        <taxon>Eutheria</taxon>
        <taxon>Euarchontoglires</taxon>
        <taxon>Glires</taxon>
        <taxon>Rodentia</taxon>
        <taxon>Myomorpha</taxon>
        <taxon>Muroidea</taxon>
        <taxon>Muridae</taxon>
        <taxon>Murinae</taxon>
        <taxon>Mus</taxon>
        <taxon>Mus</taxon>
    </lineage>
</organism>
<name>HUS1B_MOUSE</name>
<evidence type="ECO:0000250" key="1"/>
<evidence type="ECO:0000305" key="2"/>
<comment type="subunit">
    <text evidence="1">Interacts with RAD1 and RAD9B.</text>
</comment>
<comment type="similarity">
    <text evidence="2">Belongs to the HUS1 family.</text>
</comment>
<reference key="1">
    <citation type="journal article" date="2002" name="Genomics">
        <title>Identification and characterization of a paralog of human cell cycle checkpoint gene HUS1.</title>
        <authorList>
            <person name="Hang H."/>
            <person name="Zhang Y."/>
            <person name="Dunbrack R.L. Jr."/>
            <person name="Wang C."/>
            <person name="Lieberman H.B."/>
        </authorList>
    </citation>
    <scope>NUCLEOTIDE SEQUENCE [MRNA]</scope>
    <source>
        <strain>129/SvEv</strain>
    </source>
</reference>
<reference key="2">
    <citation type="journal article" date="2009" name="PLoS Biol.">
        <title>Lineage-specific biology revealed by a finished genome assembly of the mouse.</title>
        <authorList>
            <person name="Church D.M."/>
            <person name="Goodstadt L."/>
            <person name="Hillier L.W."/>
            <person name="Zody M.C."/>
            <person name="Goldstein S."/>
            <person name="She X."/>
            <person name="Bult C.J."/>
            <person name="Agarwala R."/>
            <person name="Cherry J.L."/>
            <person name="DiCuccio M."/>
            <person name="Hlavina W."/>
            <person name="Kapustin Y."/>
            <person name="Meric P."/>
            <person name="Maglott D."/>
            <person name="Birtle Z."/>
            <person name="Marques A.C."/>
            <person name="Graves T."/>
            <person name="Zhou S."/>
            <person name="Teague B."/>
            <person name="Potamousis K."/>
            <person name="Churas C."/>
            <person name="Place M."/>
            <person name="Herschleb J."/>
            <person name="Runnheim R."/>
            <person name="Forrest D."/>
            <person name="Amos-Landgraf J."/>
            <person name="Schwartz D.C."/>
            <person name="Cheng Z."/>
            <person name="Lindblad-Toh K."/>
            <person name="Eichler E.E."/>
            <person name="Ponting C.P."/>
        </authorList>
    </citation>
    <scope>NUCLEOTIDE SEQUENCE [LARGE SCALE GENOMIC DNA]</scope>
    <source>
        <strain>C57BL/6J</strain>
    </source>
</reference>
<protein>
    <recommendedName>
        <fullName>Checkpoint protein HUS1B</fullName>
        <shortName>mHUS1B</shortName>
    </recommendedName>
</protein>
<accession>Q8K572</accession>
<sequence length="276" mass="31251">MRFRARITSKRFIELFIQVSSTVAKLAKVCVLRVCPDRLYFCPMGLLGEAQLWGEMRRDVFHHFCMEGASQEFNEICLELMSEHLARAVKNAGNASSLKLQLTNKQRPCLTLVVELASCPGHTRAVVHDLPVRVLPRRRWKDCTEPHVRGSDVSVYLPALKTLKNMVERMANVGSHVLVEANLNGRMNLTVETDRVTIKSYFKNLGNPPNAVLCMSQGRDPETMVQVRVDNRKLLQCFDGHQINPTMALCNILSNTLLHLVLVHEDISLQYFIPAS</sequence>
<proteinExistence type="evidence at transcript level"/>
<gene>
    <name type="primary">Hus1b</name>
</gene>
<dbReference type="EMBL" id="AF508546">
    <property type="protein sequence ID" value="AAM28903.1"/>
    <property type="molecule type" value="mRNA"/>
</dbReference>
<dbReference type="EMBL" id="AL606764">
    <property type="status" value="NOT_ANNOTATED_CDS"/>
    <property type="molecule type" value="Genomic_DNA"/>
</dbReference>
<dbReference type="CCDS" id="CCDS26421.1"/>
<dbReference type="RefSeq" id="NP_694712.1">
    <property type="nucleotide sequence ID" value="NM_153072.2"/>
</dbReference>
<dbReference type="SMR" id="Q8K572"/>
<dbReference type="FunCoup" id="Q8K572">
    <property type="interactions" value="25"/>
</dbReference>
<dbReference type="STRING" id="10090.ENSMUSP00000100007"/>
<dbReference type="PhosphoSitePlus" id="Q8K572"/>
<dbReference type="SwissPalm" id="Q8K572"/>
<dbReference type="PaxDb" id="10090-ENSMUSP00000100007"/>
<dbReference type="ProteomicsDB" id="273286"/>
<dbReference type="Antibodypedia" id="24237">
    <property type="antibodies" value="117 antibodies from 28 providers"/>
</dbReference>
<dbReference type="DNASU" id="210554"/>
<dbReference type="Ensembl" id="ENSMUST00000102943.2">
    <property type="protein sequence ID" value="ENSMUSP00000100007.2"/>
    <property type="gene ID" value="ENSMUSG00000076430.2"/>
</dbReference>
<dbReference type="GeneID" id="210554"/>
<dbReference type="KEGG" id="mmu:210554"/>
<dbReference type="UCSC" id="uc007pzf.2">
    <property type="organism name" value="mouse"/>
</dbReference>
<dbReference type="AGR" id="MGI:2671003"/>
<dbReference type="CTD" id="135458"/>
<dbReference type="MGI" id="MGI:2671003">
    <property type="gene designation" value="Hus1b"/>
</dbReference>
<dbReference type="VEuPathDB" id="HostDB:ENSMUSG00000076430"/>
<dbReference type="eggNOG" id="KOG3999">
    <property type="taxonomic scope" value="Eukaryota"/>
</dbReference>
<dbReference type="GeneTree" id="ENSGT00390000000706"/>
<dbReference type="HOGENOM" id="CLU_035754_1_0_1"/>
<dbReference type="InParanoid" id="Q8K572"/>
<dbReference type="OMA" id="QVRVDNR"/>
<dbReference type="OrthoDB" id="10063861at2759"/>
<dbReference type="PhylomeDB" id="Q8K572"/>
<dbReference type="TreeFam" id="TF314491"/>
<dbReference type="BioGRID-ORCS" id="210554">
    <property type="hits" value="0 hits in 111 CRISPR screens"/>
</dbReference>
<dbReference type="PRO" id="PR:Q8K572"/>
<dbReference type="Proteomes" id="UP000000589">
    <property type="component" value="Chromosome 13"/>
</dbReference>
<dbReference type="RNAct" id="Q8K572">
    <property type="molecule type" value="protein"/>
</dbReference>
<dbReference type="Bgee" id="ENSMUSG00000076430">
    <property type="expression patterns" value="Expressed in spermatocyte and 13 other cell types or tissues"/>
</dbReference>
<dbReference type="ExpressionAtlas" id="Q8K572">
    <property type="expression patterns" value="baseline and differential"/>
</dbReference>
<dbReference type="GO" id="GO:0030896">
    <property type="term" value="C:checkpoint clamp complex"/>
    <property type="evidence" value="ECO:0007669"/>
    <property type="project" value="InterPro"/>
</dbReference>
<dbReference type="GO" id="GO:0005730">
    <property type="term" value="C:nucleolus"/>
    <property type="evidence" value="ECO:0007669"/>
    <property type="project" value="InterPro"/>
</dbReference>
<dbReference type="GO" id="GO:0000077">
    <property type="term" value="P:DNA damage checkpoint signaling"/>
    <property type="evidence" value="ECO:0007669"/>
    <property type="project" value="InterPro"/>
</dbReference>
<dbReference type="Gene3D" id="3.70.10.10">
    <property type="match status" value="1"/>
</dbReference>
<dbReference type="InterPro" id="IPR016580">
    <property type="entry name" value="Cell_cycle_HUS1"/>
</dbReference>
<dbReference type="InterPro" id="IPR007150">
    <property type="entry name" value="Hus1/Mec3"/>
</dbReference>
<dbReference type="PANTHER" id="PTHR12900:SF3">
    <property type="entry name" value="CHECKPOINT PROTEIN HUS1B"/>
    <property type="match status" value="1"/>
</dbReference>
<dbReference type="PANTHER" id="PTHR12900">
    <property type="entry name" value="MITOTIC AND DNA DAMAGE CHECKPOINT PROTEIN HUS1"/>
    <property type="match status" value="1"/>
</dbReference>
<dbReference type="Pfam" id="PF04005">
    <property type="entry name" value="Hus1"/>
    <property type="match status" value="1"/>
</dbReference>
<dbReference type="PIRSF" id="PIRSF011312">
    <property type="entry name" value="Cell_cycle_HUS1"/>
    <property type="match status" value="1"/>
</dbReference>